<protein>
    <recommendedName>
        <fullName evidence="1">Trigger factor</fullName>
        <shortName evidence="1">TF</shortName>
        <ecNumber evidence="1">5.2.1.8</ecNumber>
    </recommendedName>
    <alternativeName>
        <fullName evidence="1">PPIase</fullName>
    </alternativeName>
</protein>
<comment type="function">
    <text evidence="1">Involved in protein export. Acts as a chaperone by maintaining the newly synthesized protein in an open conformation. Functions as a peptidyl-prolyl cis-trans isomerase.</text>
</comment>
<comment type="catalytic activity">
    <reaction evidence="1">
        <text>[protein]-peptidylproline (omega=180) = [protein]-peptidylproline (omega=0)</text>
        <dbReference type="Rhea" id="RHEA:16237"/>
        <dbReference type="Rhea" id="RHEA-COMP:10747"/>
        <dbReference type="Rhea" id="RHEA-COMP:10748"/>
        <dbReference type="ChEBI" id="CHEBI:83833"/>
        <dbReference type="ChEBI" id="CHEBI:83834"/>
        <dbReference type="EC" id="5.2.1.8"/>
    </reaction>
</comment>
<comment type="subcellular location">
    <subcellularLocation>
        <location>Cytoplasm</location>
    </subcellularLocation>
    <text evidence="1">About half TF is bound to the ribosome near the polypeptide exit tunnel while the other half is free in the cytoplasm.</text>
</comment>
<comment type="domain">
    <text evidence="1">Consists of 3 domains; the N-terminus binds the ribosome, the middle domain has PPIase activity, while the C-terminus has intrinsic chaperone activity on its own.</text>
</comment>
<comment type="similarity">
    <text evidence="1">Belongs to the FKBP-type PPIase family. Tig subfamily.</text>
</comment>
<evidence type="ECO:0000255" key="1">
    <source>
        <dbReference type="HAMAP-Rule" id="MF_00303"/>
    </source>
</evidence>
<gene>
    <name evidence="1" type="primary">tig</name>
    <name type="ordered locus">SG0458</name>
</gene>
<feature type="chain" id="PRO_1000115576" description="Trigger factor">
    <location>
        <begin position="1"/>
        <end position="432"/>
    </location>
</feature>
<feature type="domain" description="PPIase FKBP-type" evidence="1">
    <location>
        <begin position="161"/>
        <end position="246"/>
    </location>
</feature>
<name>TIG_SALG2</name>
<accession>B5R6U8</accession>
<proteinExistence type="inferred from homology"/>
<organism>
    <name type="scientific">Salmonella gallinarum (strain 287/91 / NCTC 13346)</name>
    <dbReference type="NCBI Taxonomy" id="550538"/>
    <lineage>
        <taxon>Bacteria</taxon>
        <taxon>Pseudomonadati</taxon>
        <taxon>Pseudomonadota</taxon>
        <taxon>Gammaproteobacteria</taxon>
        <taxon>Enterobacterales</taxon>
        <taxon>Enterobacteriaceae</taxon>
        <taxon>Salmonella</taxon>
    </lineage>
</organism>
<dbReference type="EC" id="5.2.1.8" evidence="1"/>
<dbReference type="EMBL" id="AM933173">
    <property type="protein sequence ID" value="CAR36357.1"/>
    <property type="molecule type" value="Genomic_DNA"/>
</dbReference>
<dbReference type="RefSeq" id="WP_001198403.1">
    <property type="nucleotide sequence ID" value="NC_011274.1"/>
</dbReference>
<dbReference type="SMR" id="B5R6U8"/>
<dbReference type="KEGG" id="seg:SG0458"/>
<dbReference type="HOGENOM" id="CLU_033058_2_0_6"/>
<dbReference type="Proteomes" id="UP000008321">
    <property type="component" value="Chromosome"/>
</dbReference>
<dbReference type="GO" id="GO:0005737">
    <property type="term" value="C:cytoplasm"/>
    <property type="evidence" value="ECO:0007669"/>
    <property type="project" value="UniProtKB-SubCell"/>
</dbReference>
<dbReference type="GO" id="GO:0003755">
    <property type="term" value="F:peptidyl-prolyl cis-trans isomerase activity"/>
    <property type="evidence" value="ECO:0007669"/>
    <property type="project" value="UniProtKB-UniRule"/>
</dbReference>
<dbReference type="GO" id="GO:0044183">
    <property type="term" value="F:protein folding chaperone"/>
    <property type="evidence" value="ECO:0007669"/>
    <property type="project" value="TreeGrafter"/>
</dbReference>
<dbReference type="GO" id="GO:0043022">
    <property type="term" value="F:ribosome binding"/>
    <property type="evidence" value="ECO:0007669"/>
    <property type="project" value="TreeGrafter"/>
</dbReference>
<dbReference type="GO" id="GO:0051083">
    <property type="term" value="P:'de novo' cotranslational protein folding"/>
    <property type="evidence" value="ECO:0007669"/>
    <property type="project" value="TreeGrafter"/>
</dbReference>
<dbReference type="GO" id="GO:0051301">
    <property type="term" value="P:cell division"/>
    <property type="evidence" value="ECO:0007669"/>
    <property type="project" value="UniProtKB-KW"/>
</dbReference>
<dbReference type="GO" id="GO:0061077">
    <property type="term" value="P:chaperone-mediated protein folding"/>
    <property type="evidence" value="ECO:0007669"/>
    <property type="project" value="TreeGrafter"/>
</dbReference>
<dbReference type="GO" id="GO:0015031">
    <property type="term" value="P:protein transport"/>
    <property type="evidence" value="ECO:0007669"/>
    <property type="project" value="UniProtKB-UniRule"/>
</dbReference>
<dbReference type="GO" id="GO:0043335">
    <property type="term" value="P:protein unfolding"/>
    <property type="evidence" value="ECO:0007669"/>
    <property type="project" value="TreeGrafter"/>
</dbReference>
<dbReference type="FunFam" id="1.10.3120.10:FF:000001">
    <property type="entry name" value="Trigger factor"/>
    <property type="match status" value="1"/>
</dbReference>
<dbReference type="FunFam" id="3.10.50.40:FF:000001">
    <property type="entry name" value="Trigger factor"/>
    <property type="match status" value="1"/>
</dbReference>
<dbReference type="FunFam" id="3.30.70.1050:FF:000001">
    <property type="entry name" value="Trigger factor"/>
    <property type="match status" value="1"/>
</dbReference>
<dbReference type="Gene3D" id="3.10.50.40">
    <property type="match status" value="1"/>
</dbReference>
<dbReference type="Gene3D" id="3.30.70.1050">
    <property type="entry name" value="Trigger factor ribosome-binding domain"/>
    <property type="match status" value="1"/>
</dbReference>
<dbReference type="Gene3D" id="1.10.3120.10">
    <property type="entry name" value="Trigger factor, C-terminal domain"/>
    <property type="match status" value="1"/>
</dbReference>
<dbReference type="HAMAP" id="MF_00303">
    <property type="entry name" value="Trigger_factor_Tig"/>
    <property type="match status" value="1"/>
</dbReference>
<dbReference type="InterPro" id="IPR046357">
    <property type="entry name" value="PPIase_dom_sf"/>
</dbReference>
<dbReference type="InterPro" id="IPR001179">
    <property type="entry name" value="PPIase_FKBP_dom"/>
</dbReference>
<dbReference type="InterPro" id="IPR005215">
    <property type="entry name" value="Trig_fac"/>
</dbReference>
<dbReference type="InterPro" id="IPR008880">
    <property type="entry name" value="Trigger_fac_C"/>
</dbReference>
<dbReference type="InterPro" id="IPR037041">
    <property type="entry name" value="Trigger_fac_C_sf"/>
</dbReference>
<dbReference type="InterPro" id="IPR008881">
    <property type="entry name" value="Trigger_fac_ribosome-bd_bac"/>
</dbReference>
<dbReference type="InterPro" id="IPR036611">
    <property type="entry name" value="Trigger_fac_ribosome-bd_sf"/>
</dbReference>
<dbReference type="InterPro" id="IPR027304">
    <property type="entry name" value="Trigger_fact/SurA_dom_sf"/>
</dbReference>
<dbReference type="NCBIfam" id="TIGR00115">
    <property type="entry name" value="tig"/>
    <property type="match status" value="1"/>
</dbReference>
<dbReference type="PANTHER" id="PTHR30560">
    <property type="entry name" value="TRIGGER FACTOR CHAPERONE AND PEPTIDYL-PROLYL CIS/TRANS ISOMERASE"/>
    <property type="match status" value="1"/>
</dbReference>
<dbReference type="PANTHER" id="PTHR30560:SF3">
    <property type="entry name" value="TRIGGER FACTOR-LIKE PROTEIN TIG, CHLOROPLASTIC"/>
    <property type="match status" value="1"/>
</dbReference>
<dbReference type="Pfam" id="PF00254">
    <property type="entry name" value="FKBP_C"/>
    <property type="match status" value="1"/>
</dbReference>
<dbReference type="Pfam" id="PF05698">
    <property type="entry name" value="Trigger_C"/>
    <property type="match status" value="1"/>
</dbReference>
<dbReference type="Pfam" id="PF05697">
    <property type="entry name" value="Trigger_N"/>
    <property type="match status" value="1"/>
</dbReference>
<dbReference type="PIRSF" id="PIRSF003095">
    <property type="entry name" value="Trigger_factor"/>
    <property type="match status" value="1"/>
</dbReference>
<dbReference type="SUPFAM" id="SSF54534">
    <property type="entry name" value="FKBP-like"/>
    <property type="match status" value="1"/>
</dbReference>
<dbReference type="SUPFAM" id="SSF109998">
    <property type="entry name" value="Triger factor/SurA peptide-binding domain-like"/>
    <property type="match status" value="1"/>
</dbReference>
<dbReference type="SUPFAM" id="SSF102735">
    <property type="entry name" value="Trigger factor ribosome-binding domain"/>
    <property type="match status" value="1"/>
</dbReference>
<dbReference type="PROSITE" id="PS50059">
    <property type="entry name" value="FKBP_PPIASE"/>
    <property type="match status" value="1"/>
</dbReference>
<keyword id="KW-0131">Cell cycle</keyword>
<keyword id="KW-0132">Cell division</keyword>
<keyword id="KW-0143">Chaperone</keyword>
<keyword id="KW-0963">Cytoplasm</keyword>
<keyword id="KW-0413">Isomerase</keyword>
<keyword id="KW-0697">Rotamase</keyword>
<sequence>MQVSVETTQGLGRRVTITIAADSIETAVKSELVNVAKKVRIDGFRKGKVPMNIVAQRYGASVRQDVLGDLMSRNFVDAIIKEKINPAGAPNYVPGEYKVGEDFTYSVEFEVYPEVELTGLESIEVEKPVVEVTDADVDVMLDTLRKQQATWKEKDGAADAEDRVTIDFTGSVDGEEFEGGKATDFVLAMGQGRMIPGFEDGVKGHKAGEEFTIDVTFPEEYHAENLKGKAAKFVINLKKVEERELPELTEEFIKRFGVEDGSVAGLRAEVRKNMERELKGAVRNRVKSQAIEGLVKANDIDVPAALIDSEIDVLRRQAAQRFGGNEKQALELPRELFEEQAKRRVVVGLLLGEVIRTNELKADEERVKGLIEEMASAYEDPKEVIEFYSKNKELMDNMRNVALEEQAVEAVLAKAKVSEKATSFNELMNQQA</sequence>
<reference key="1">
    <citation type="journal article" date="2008" name="Genome Res.">
        <title>Comparative genome analysis of Salmonella enteritidis PT4 and Salmonella gallinarum 287/91 provides insights into evolutionary and host adaptation pathways.</title>
        <authorList>
            <person name="Thomson N.R."/>
            <person name="Clayton D.J."/>
            <person name="Windhorst D."/>
            <person name="Vernikos G."/>
            <person name="Davidson S."/>
            <person name="Churcher C."/>
            <person name="Quail M.A."/>
            <person name="Stevens M."/>
            <person name="Jones M.A."/>
            <person name="Watson M."/>
            <person name="Barron A."/>
            <person name="Layton A."/>
            <person name="Pickard D."/>
            <person name="Kingsley R.A."/>
            <person name="Bignell A."/>
            <person name="Clark L."/>
            <person name="Harris B."/>
            <person name="Ormond D."/>
            <person name="Abdellah Z."/>
            <person name="Brooks K."/>
            <person name="Cherevach I."/>
            <person name="Chillingworth T."/>
            <person name="Woodward J."/>
            <person name="Norberczak H."/>
            <person name="Lord A."/>
            <person name="Arrowsmith C."/>
            <person name="Jagels K."/>
            <person name="Moule S."/>
            <person name="Mungall K."/>
            <person name="Saunders M."/>
            <person name="Whitehead S."/>
            <person name="Chabalgoity J.A."/>
            <person name="Maskell D."/>
            <person name="Humphreys T."/>
            <person name="Roberts M."/>
            <person name="Barrow P.A."/>
            <person name="Dougan G."/>
            <person name="Parkhill J."/>
        </authorList>
    </citation>
    <scope>NUCLEOTIDE SEQUENCE [LARGE SCALE GENOMIC DNA]</scope>
    <source>
        <strain>287/91 / NCTC 13346</strain>
    </source>
</reference>